<proteinExistence type="evidence at protein level"/>
<organism evidence="9">
    <name type="scientific">Homo sapiens</name>
    <name type="common">Human</name>
    <dbReference type="NCBI Taxonomy" id="9606"/>
    <lineage>
        <taxon>Eukaryota</taxon>
        <taxon>Metazoa</taxon>
        <taxon>Chordata</taxon>
        <taxon>Craniata</taxon>
        <taxon>Vertebrata</taxon>
        <taxon>Euteleostomi</taxon>
        <taxon>Mammalia</taxon>
        <taxon>Eutheria</taxon>
        <taxon>Euarchontoglires</taxon>
        <taxon>Primates</taxon>
        <taxon>Haplorrhini</taxon>
        <taxon>Catarrhini</taxon>
        <taxon>Hominidae</taxon>
        <taxon>Homo</taxon>
    </lineage>
</organism>
<keyword id="KW-0963">Cytoplasm</keyword>
<keyword id="KW-0217">Developmental protein</keyword>
<keyword id="KW-0221">Differentiation</keyword>
<keyword id="KW-0225">Disease variant</keyword>
<keyword id="KW-0238">DNA-binding</keyword>
<keyword id="KW-0038">Ectodermal dysplasia</keyword>
<keyword id="KW-0539">Nucleus</keyword>
<keyword id="KW-1267">Proteomics identification</keyword>
<keyword id="KW-1185">Reference proteome</keyword>
<keyword id="KW-0678">Repressor</keyword>
<keyword id="KW-0804">Transcription</keyword>
<keyword id="KW-0805">Transcription regulation</keyword>
<sequence length="160" mass="18124">MEEGSSSPVSPVDSLGTSEEELERQPKRFGRKRRYSKKSSEDGSPTPGKRGKKGSPSAQSFEELQSQRILANVRERQRTQSLNEAFAALRKIIPTLPSDKLSKIQTLKLAARYIDFLYQVLQSDEMDNKMTSCSYVAHERLSYAFSVWRMEGAWSMSASH</sequence>
<feature type="chain" id="PRO_0000127489" description="Twist-related protein 2">
    <location>
        <begin position="1"/>
        <end position="160"/>
    </location>
</feature>
<feature type="domain" description="bHLH" evidence="2">
    <location>
        <begin position="66"/>
        <end position="117"/>
    </location>
</feature>
<feature type="region of interest" description="Disordered" evidence="3">
    <location>
        <begin position="1"/>
        <end position="63"/>
    </location>
</feature>
<feature type="compositionally biased region" description="Basic residues" evidence="3">
    <location>
        <begin position="27"/>
        <end position="37"/>
    </location>
</feature>
<feature type="sequence variant" id="VAR_074674" description="In BBRSAY; decreased chromatin binding; the mutant binds to alternative chromatin binding sites compared to wild-type; dbSNP:rs796065048." evidence="7">
    <original>E</original>
    <variation>A</variation>
    <location>
        <position position="75"/>
    </location>
</feature>
<feature type="sequence variant" id="VAR_074675" description="In AMS; decreased chromatin binding; the mutant binds to alternative chromatin binding sites compared to wild-type; dbSNP:rs796065049." evidence="7">
    <original>E</original>
    <variation>K</variation>
    <location>
        <position position="75"/>
    </location>
</feature>
<feature type="sequence variant" id="VAR_074676" description="In BBRSAY; decreased chromatin binding; the mutant binds to alternative chromatin binding sites compared to wild-type; dbSNP:rs796065049." evidence="7">
    <original>E</original>
    <variation>Q</variation>
    <location>
        <position position="75"/>
    </location>
</feature>
<feature type="sequence variant" id="VAR_074677" description="In BBRSAY; decreased chromatin binding; the mutant binds to alternative chromatin binding sites compared to wild-type." evidence="7">
    <original>R</original>
    <variation>RQR</variation>
    <location>
        <position position="78"/>
    </location>
</feature>
<feature type="sequence variant" id="VAR_072927" description="In FFDD3." evidence="6">
    <original>L</original>
    <variation>P</variation>
    <location>
        <position position="109"/>
    </location>
</feature>
<feature type="sequence conflict" description="In Ref. 1; no nucleotide entry." evidence="8" ref="1">
    <original>R</original>
    <variation>L</variation>
    <location>
        <position position="31"/>
    </location>
</feature>
<feature type="sequence conflict" description="In Ref. 1; no nucleotide entry." evidence="8" ref="1">
    <original>L</original>
    <variation>V</variation>
    <location>
        <position position="109"/>
    </location>
</feature>
<accession>Q8WVJ9</accession>
<accession>Q3SYL6</accession>
<reference evidence="8" key="1">
    <citation type="journal article" date="2000" name="Bone">
        <title>Human Dermo-1 has attributes similar to twist in early bone development.</title>
        <authorList>
            <person name="Lee M.S."/>
            <person name="Lowe G."/>
            <person name="Flanagan S."/>
            <person name="Kuchler K."/>
            <person name="Glackin C.A."/>
        </authorList>
    </citation>
    <scope>NUCLEOTIDE SEQUENCE [MRNA]</scope>
    <scope>FUNCTION</scope>
    <scope>SUBCELLULAR LOCATION</scope>
    <scope>TISSUE SPECIFICITY</scope>
    <source>
        <tissue evidence="4">Bone</tissue>
    </source>
</reference>
<reference evidence="9" key="2">
    <citation type="journal article" date="2004" name="Genome Res.">
        <title>The status, quality, and expansion of the NIH full-length cDNA project: the Mammalian Gene Collection (MGC).</title>
        <authorList>
            <consortium name="The MGC Project Team"/>
        </authorList>
    </citation>
    <scope>NUCLEOTIDE SEQUENCE [LARGE SCALE MRNA]</scope>
    <source>
        <tissue evidence="9">Brain</tissue>
        <tissue evidence="10">Lung</tissue>
        <tissue>Pancreas</tissue>
    </source>
</reference>
<reference key="3">
    <citation type="journal article" date="2010" name="Am. J. Hum. Genet.">
        <title>Homozygous nonsense mutations in TWIST2 cause Setleis syndrome.</title>
        <authorList>
            <person name="Tukel T."/>
            <person name="Sosic D."/>
            <person name="Al-Gazali L.I."/>
            <person name="Erazo M."/>
            <person name="Casasnovas J."/>
            <person name="Franco H.L."/>
            <person name="Richardson J.A."/>
            <person name="Olson E.N."/>
            <person name="Cadilla C.L."/>
            <person name="Desnick R.J."/>
        </authorList>
    </citation>
    <scope>INVOLVEMENT IN FFDD3</scope>
</reference>
<reference key="4">
    <citation type="journal article" date="2015" name="Am. J. Hum. Genet.">
        <title>Recurrent Mutations in the basic domain of TWIST2 cause ablepharon macrostomia and Barber-Say syndromes.</title>
        <authorList>
            <person name="Marchegiani S."/>
            <person name="Davis T."/>
            <person name="Tessadori F."/>
            <person name="van Haaften G."/>
            <person name="Brancati F."/>
            <person name="Hoischen A."/>
            <person name="Huang H."/>
            <person name="Valkanas E."/>
            <person name="Pusey B."/>
            <person name="Schanze D."/>
            <person name="Venselaar H."/>
            <person name="Vulto-van Silfhout A.T."/>
            <person name="Wolfe L.A."/>
            <person name="Tifft C.J."/>
            <person name="Zerfas P.M."/>
            <person name="Zambruno G."/>
            <person name="Kariminejad A."/>
            <person name="Sabbagh-Kermani F."/>
            <person name="Lee J."/>
            <person name="Tsokos M.G."/>
            <person name="Lee C.C."/>
            <person name="Ferraz V."/>
            <person name="da Silva E.M."/>
            <person name="Stevens C.A."/>
            <person name="Roche N."/>
            <person name="Bartsch O."/>
            <person name="Farndon P."/>
            <person name="Bermejo-Sanchez E."/>
            <person name="Brooks B.P."/>
            <person name="Maduro V."/>
            <person name="Dallapiccola B."/>
            <person name="Ramos F.J."/>
            <person name="Chung H.Y."/>
            <person name="Le Caignec C."/>
            <person name="Martins F."/>
            <person name="Jacyk W.K."/>
            <person name="Mazzanti L."/>
            <person name="Brunner H.G."/>
            <person name="Bakkers J."/>
            <person name="Lin S."/>
            <person name="Malicdan M.C."/>
            <person name="Boerkoel C.F."/>
            <person name="Gahl W.A."/>
            <person name="de Vries B.B."/>
            <person name="van Haelst M.M."/>
            <person name="Zenker M."/>
            <person name="Markello T.C."/>
        </authorList>
    </citation>
    <scope>INVOLVEMENT IN AMS</scope>
    <scope>INVOLVEMENT IN BBRSAY</scope>
    <scope>VARIANT AMS LYS-75</scope>
    <scope>CHARACTERIZATION OF VARIANT AMS LYS-75</scope>
    <scope>VARIANTS BBRSAY ALA-75; GLN-75 AND GLN-ARG-78 INS</scope>
    <scope>CHARACTERIZATION OF VARIANTS BBRSAY ALA-75; GLN-75 AND GLN-ARG-78 INS</scope>
</reference>
<reference key="5">
    <citation type="journal article" date="2015" name="Clin. Genet.">
        <title>Setleis syndrome: clinical, molecular and structural studies of the first TWIST2 missense mutation.</title>
        <authorList>
            <person name="Rosti R.O."/>
            <person name="Uyguner Z.O."/>
            <person name="Nazarenko I."/>
            <person name="Bekerecioglu M."/>
            <person name="Cadilla C.L."/>
            <person name="Ozgur H."/>
            <person name="Lee B.H."/>
            <person name="Aggarwal A.K."/>
            <person name="Pehlivan S."/>
            <person name="Desnick R.J."/>
        </authorList>
    </citation>
    <scope>VARIANT FFDD3 PRO-109</scope>
</reference>
<name>TWST2_HUMAN</name>
<gene>
    <name type="primary">TWIST2</name>
    <name type="synonym">BHLHA39</name>
    <name type="synonym">DERMO1</name>
</gene>
<dbReference type="EMBL" id="BC017907">
    <property type="protein sequence ID" value="AAH17907.1"/>
    <property type="molecule type" value="mRNA"/>
</dbReference>
<dbReference type="EMBL" id="BC033168">
    <property type="protein sequence ID" value="AAH33168.1"/>
    <property type="molecule type" value="mRNA"/>
</dbReference>
<dbReference type="EMBL" id="BC103755">
    <property type="protein sequence ID" value="AAI03756.1"/>
    <property type="molecule type" value="mRNA"/>
</dbReference>
<dbReference type="CCDS" id="CCDS46558.1"/>
<dbReference type="RefSeq" id="NP_001258822.1">
    <property type="nucleotide sequence ID" value="NM_001271893.4"/>
</dbReference>
<dbReference type="RefSeq" id="NP_476527.1">
    <property type="nucleotide sequence ID" value="NM_057179.3"/>
</dbReference>
<dbReference type="SMR" id="Q8WVJ9"/>
<dbReference type="BioGRID" id="125591">
    <property type="interactions" value="17"/>
</dbReference>
<dbReference type="FunCoup" id="Q8WVJ9">
    <property type="interactions" value="1845"/>
</dbReference>
<dbReference type="IntAct" id="Q8WVJ9">
    <property type="interactions" value="19"/>
</dbReference>
<dbReference type="STRING" id="9606.ENSP00000482581"/>
<dbReference type="GlyGen" id="Q8WVJ9">
    <property type="glycosylation" value="3 sites, 1 O-linked glycan (2 sites)"/>
</dbReference>
<dbReference type="iPTMnet" id="Q8WVJ9"/>
<dbReference type="PhosphoSitePlus" id="Q8WVJ9"/>
<dbReference type="BioMuta" id="TWIST2"/>
<dbReference type="DMDM" id="32699724"/>
<dbReference type="jPOST" id="Q8WVJ9"/>
<dbReference type="MassIVE" id="Q8WVJ9"/>
<dbReference type="PaxDb" id="9606-ENSP00000482581"/>
<dbReference type="PeptideAtlas" id="Q8WVJ9"/>
<dbReference type="ProteomicsDB" id="74799"/>
<dbReference type="Antibodypedia" id="34502">
    <property type="antibodies" value="266 antibodies from 31 providers"/>
</dbReference>
<dbReference type="DNASU" id="117581"/>
<dbReference type="Ensembl" id="ENST00000448943.2">
    <property type="protein sequence ID" value="ENSP00000405176.2"/>
    <property type="gene ID" value="ENSG00000233608.5"/>
</dbReference>
<dbReference type="Ensembl" id="ENST00000612363.2">
    <property type="protein sequence ID" value="ENSP00000482581.1"/>
    <property type="gene ID" value="ENSG00000233608.5"/>
</dbReference>
<dbReference type="Ensembl" id="ENST00000671947.1">
    <property type="protein sequence ID" value="ENSP00000500609.1"/>
    <property type="gene ID" value="ENSG00000288335.2"/>
</dbReference>
<dbReference type="Ensembl" id="ENST00000673387.1">
    <property type="protein sequence ID" value="ENSP00000500440.1"/>
    <property type="gene ID" value="ENSG00000288335.2"/>
</dbReference>
<dbReference type="Ensembl" id="ENST00000710607.1">
    <property type="protein sequence ID" value="ENSP00000518373.1"/>
    <property type="gene ID" value="ENSG00000233608.5"/>
</dbReference>
<dbReference type="Ensembl" id="ENST00000710608.1">
    <property type="protein sequence ID" value="ENSP00000518374.1"/>
    <property type="gene ID" value="ENSG00000288335.2"/>
</dbReference>
<dbReference type="GeneID" id="117581"/>
<dbReference type="KEGG" id="hsa:117581"/>
<dbReference type="MANE-Select" id="ENST00000612363.2">
    <property type="protein sequence ID" value="ENSP00000482581.1"/>
    <property type="RefSeq nucleotide sequence ID" value="NM_001271893.4"/>
    <property type="RefSeq protein sequence ID" value="NP_001258822.1"/>
</dbReference>
<dbReference type="UCSC" id="uc010znx.2">
    <property type="organism name" value="human"/>
</dbReference>
<dbReference type="AGR" id="HGNC:20670"/>
<dbReference type="CTD" id="117581"/>
<dbReference type="DisGeNET" id="117581"/>
<dbReference type="GeneCards" id="TWIST2"/>
<dbReference type="HGNC" id="HGNC:20670">
    <property type="gene designation" value="TWIST2"/>
</dbReference>
<dbReference type="HPA" id="ENSG00000233608">
    <property type="expression patterns" value="Tissue enhanced (cervix)"/>
</dbReference>
<dbReference type="MalaCards" id="TWIST2"/>
<dbReference type="MIM" id="200110">
    <property type="type" value="phenotype"/>
</dbReference>
<dbReference type="MIM" id="209885">
    <property type="type" value="phenotype"/>
</dbReference>
<dbReference type="MIM" id="227260">
    <property type="type" value="phenotype"/>
</dbReference>
<dbReference type="MIM" id="607556">
    <property type="type" value="gene"/>
</dbReference>
<dbReference type="neXtProt" id="NX_Q8WVJ9"/>
<dbReference type="OpenTargets" id="ENSG00000233608"/>
<dbReference type="Orphanet" id="920">
    <property type="disease" value="Ablepharon macrostomia syndrome"/>
</dbReference>
<dbReference type="Orphanet" id="1231">
    <property type="disease" value="Barber-Say syndrome"/>
</dbReference>
<dbReference type="Orphanet" id="1807">
    <property type="disease" value="Focal facial dermal dysplasia type III"/>
</dbReference>
<dbReference type="PharmGKB" id="PA134973713"/>
<dbReference type="VEuPathDB" id="HostDB:ENSG00000233608"/>
<dbReference type="eggNOG" id="KOG4447">
    <property type="taxonomic scope" value="Eukaryota"/>
</dbReference>
<dbReference type="GeneTree" id="ENSGT00940000161996"/>
<dbReference type="HOGENOM" id="CLU_112073_0_1_1"/>
<dbReference type="InParanoid" id="Q8WVJ9"/>
<dbReference type="OMA" id="MPHTASI"/>
<dbReference type="OrthoDB" id="8583783at2759"/>
<dbReference type="PAN-GO" id="Q8WVJ9">
    <property type="GO annotations" value="4 GO annotations based on evolutionary models"/>
</dbReference>
<dbReference type="PhylomeDB" id="Q8WVJ9"/>
<dbReference type="TreeFam" id="TF315153"/>
<dbReference type="PathwayCommons" id="Q8WVJ9"/>
<dbReference type="Reactome" id="R-HSA-8878166">
    <property type="pathway name" value="Transcriptional regulation by RUNX2"/>
</dbReference>
<dbReference type="SignaLink" id="Q8WVJ9"/>
<dbReference type="SIGNOR" id="Q8WVJ9"/>
<dbReference type="BioGRID-ORCS" id="117581">
    <property type="hits" value="12 hits in 1085 CRISPR screens"/>
</dbReference>
<dbReference type="GeneWiki" id="TWIST2"/>
<dbReference type="GenomeRNAi" id="117581"/>
<dbReference type="Pharos" id="Q8WVJ9">
    <property type="development level" value="Tbio"/>
</dbReference>
<dbReference type="PRO" id="PR:Q8WVJ9"/>
<dbReference type="Proteomes" id="UP000005640">
    <property type="component" value="Chromosome 2"/>
</dbReference>
<dbReference type="RNAct" id="Q8WVJ9">
    <property type="molecule type" value="protein"/>
</dbReference>
<dbReference type="Bgee" id="ENSG00000233608">
    <property type="expression patterns" value="Expressed in stromal cell of endometrium and 92 other cell types or tissues"/>
</dbReference>
<dbReference type="ExpressionAtlas" id="Q8WVJ9">
    <property type="expression patterns" value="baseline and differential"/>
</dbReference>
<dbReference type="GO" id="GO:0005737">
    <property type="term" value="C:cytoplasm"/>
    <property type="evidence" value="ECO:0000314"/>
    <property type="project" value="UniProtKB"/>
</dbReference>
<dbReference type="GO" id="GO:0005730">
    <property type="term" value="C:nucleolus"/>
    <property type="evidence" value="ECO:0000314"/>
    <property type="project" value="HPA"/>
</dbReference>
<dbReference type="GO" id="GO:0005654">
    <property type="term" value="C:nucleoplasm"/>
    <property type="evidence" value="ECO:0000314"/>
    <property type="project" value="HPA"/>
</dbReference>
<dbReference type="GO" id="GO:0005634">
    <property type="term" value="C:nucleus"/>
    <property type="evidence" value="ECO:0000314"/>
    <property type="project" value="UniProtKB"/>
</dbReference>
<dbReference type="GO" id="GO:0000981">
    <property type="term" value="F:DNA-binding transcription factor activity, RNA polymerase II-specific"/>
    <property type="evidence" value="ECO:0000318"/>
    <property type="project" value="GO_Central"/>
</dbReference>
<dbReference type="GO" id="GO:0046983">
    <property type="term" value="F:protein dimerization activity"/>
    <property type="evidence" value="ECO:0007669"/>
    <property type="project" value="InterPro"/>
</dbReference>
<dbReference type="GO" id="GO:0000977">
    <property type="term" value="F:RNA polymerase II transcription regulatory region sequence-specific DNA binding"/>
    <property type="evidence" value="ECO:0000318"/>
    <property type="project" value="GO_Central"/>
</dbReference>
<dbReference type="GO" id="GO:0030154">
    <property type="term" value="P:cell differentiation"/>
    <property type="evidence" value="ECO:0007669"/>
    <property type="project" value="UniProtKB-KW"/>
</dbReference>
<dbReference type="GO" id="GO:0032502">
    <property type="term" value="P:developmental process"/>
    <property type="evidence" value="ECO:0000318"/>
    <property type="project" value="GO_Central"/>
</dbReference>
<dbReference type="GO" id="GO:0045892">
    <property type="term" value="P:negative regulation of DNA-templated transcription"/>
    <property type="evidence" value="ECO:0000250"/>
    <property type="project" value="UniProtKB"/>
</dbReference>
<dbReference type="GO" id="GO:0045668">
    <property type="term" value="P:negative regulation of osteoblast differentiation"/>
    <property type="evidence" value="ECO:0000314"/>
    <property type="project" value="UniProtKB"/>
</dbReference>
<dbReference type="GO" id="GO:0030335">
    <property type="term" value="P:positive regulation of cell migration"/>
    <property type="evidence" value="ECO:0000316"/>
    <property type="project" value="BHF-UCL"/>
</dbReference>
<dbReference type="GO" id="GO:0006357">
    <property type="term" value="P:regulation of transcription by RNA polymerase II"/>
    <property type="evidence" value="ECO:0000318"/>
    <property type="project" value="GO_Central"/>
</dbReference>
<dbReference type="CDD" id="cd19700">
    <property type="entry name" value="bHLH_TS_TWIST2"/>
    <property type="match status" value="1"/>
</dbReference>
<dbReference type="FunFam" id="4.10.280.10:FF:000030">
    <property type="entry name" value="Twist transcription factor"/>
    <property type="match status" value="1"/>
</dbReference>
<dbReference type="Gene3D" id="4.10.280.10">
    <property type="entry name" value="Helix-loop-helix DNA-binding domain"/>
    <property type="match status" value="1"/>
</dbReference>
<dbReference type="InterPro" id="IPR011598">
    <property type="entry name" value="bHLH_dom"/>
</dbReference>
<dbReference type="InterPro" id="IPR050283">
    <property type="entry name" value="E-box_TF_Regulators"/>
</dbReference>
<dbReference type="InterPro" id="IPR036638">
    <property type="entry name" value="HLH_DNA-bd_sf"/>
</dbReference>
<dbReference type="InterPro" id="IPR047094">
    <property type="entry name" value="Twist2_bHLH"/>
</dbReference>
<dbReference type="PANTHER" id="PTHR23349">
    <property type="entry name" value="BASIC HELIX-LOOP-HELIX TRANSCRIPTION FACTOR, TWIST"/>
    <property type="match status" value="1"/>
</dbReference>
<dbReference type="PANTHER" id="PTHR23349:SF70">
    <property type="entry name" value="TWIST-RELATED PROTEIN 2"/>
    <property type="match status" value="1"/>
</dbReference>
<dbReference type="Pfam" id="PF00010">
    <property type="entry name" value="HLH"/>
    <property type="match status" value="1"/>
</dbReference>
<dbReference type="SMART" id="SM00353">
    <property type="entry name" value="HLH"/>
    <property type="match status" value="1"/>
</dbReference>
<dbReference type="SUPFAM" id="SSF47459">
    <property type="entry name" value="HLH, helix-loop-helix DNA-binding domain"/>
    <property type="match status" value="1"/>
</dbReference>
<dbReference type="PROSITE" id="PS50888">
    <property type="entry name" value="BHLH"/>
    <property type="match status" value="1"/>
</dbReference>
<evidence type="ECO:0000250" key="1"/>
<evidence type="ECO:0000255" key="2">
    <source>
        <dbReference type="PROSITE-ProRule" id="PRU00981"/>
    </source>
</evidence>
<evidence type="ECO:0000256" key="3">
    <source>
        <dbReference type="SAM" id="MobiDB-lite"/>
    </source>
</evidence>
<evidence type="ECO:0000269" key="4">
    <source>
    </source>
</evidence>
<evidence type="ECO:0000269" key="5">
    <source>
    </source>
</evidence>
<evidence type="ECO:0000269" key="6">
    <source>
    </source>
</evidence>
<evidence type="ECO:0000269" key="7">
    <source>
    </source>
</evidence>
<evidence type="ECO:0000305" key="8"/>
<evidence type="ECO:0000312" key="9">
    <source>
        <dbReference type="EMBL" id="AAH17907.1"/>
    </source>
</evidence>
<evidence type="ECO:0000312" key="10">
    <source>
        <dbReference type="EMBL" id="AAH33168.1"/>
    </source>
</evidence>
<protein>
    <recommendedName>
        <fullName>Twist-related protein 2</fullName>
    </recommendedName>
    <alternativeName>
        <fullName>Class A basic helix-loop-helix protein 39</fullName>
        <shortName>bHLHa39</shortName>
    </alternativeName>
    <alternativeName>
        <fullName>Dermis-expressed protein 1</fullName>
        <shortName>Dermo-1</shortName>
    </alternativeName>
</protein>
<comment type="function">
    <text evidence="1 4">Binds to the E-box consensus sequence 5'-CANNTG-3' as a heterodimer and inhibits transcriptional activation by MYOD1, MYOG, MEF2A and MEF2C. Also represses expression of pro-inflammatory cytokines such as TNFA and IL1B. Involved in postnatal glycogen storage and energy metabolism (By similarity). Inhibits the premature or ectopic differentiation of preosteoblast cells during osteogenesis, possibly by changing the internal signal transduction response of osteoblasts to external growth factors.</text>
</comment>
<comment type="subunit">
    <text evidence="1">Efficient DNA binding requires dimerization with another bHLH protein. Forms a heterodimer with TCF3/E12. Also interacts with MEF2C (By similarity).</text>
</comment>
<comment type="interaction">
    <interactant intactId="EBI-1797313">
        <id>Q8WVJ9</id>
    </interactant>
    <interactant intactId="EBI-640741">
        <id>P01023</id>
        <label>A2M</label>
    </interactant>
    <organismsDiffer>false</organismsDiffer>
    <experiments>3</experiments>
</comment>
<comment type="interaction">
    <interactant intactId="EBI-1797313">
        <id>Q8WVJ9</id>
    </interactant>
    <interactant intactId="EBI-930964">
        <id>P54253</id>
        <label>ATXN1</label>
    </interactant>
    <organismsDiffer>false</organismsDiffer>
    <experiments>6</experiments>
</comment>
<comment type="interaction">
    <interactant intactId="EBI-1797313">
        <id>Q8WVJ9</id>
    </interactant>
    <interactant intactId="EBI-702390">
        <id>Q9UBB4</id>
        <label>ATXN10</label>
    </interactant>
    <organismsDiffer>false</organismsDiffer>
    <experiments>3</experiments>
</comment>
<comment type="interaction">
    <interactant intactId="EBI-1797313">
        <id>Q8WVJ9</id>
    </interactant>
    <interactant intactId="EBI-1573056">
        <id>Q9BSQ5</id>
        <label>CCM2</label>
    </interactant>
    <organismsDiffer>false</organismsDiffer>
    <experiments>3</experiments>
</comment>
<comment type="interaction">
    <interactant intactId="EBI-1797313">
        <id>Q8WVJ9</id>
    </interactant>
    <interactant intactId="EBI-25840379">
        <id>Q14203-5</id>
        <label>DCTN1</label>
    </interactant>
    <organismsDiffer>false</organismsDiffer>
    <experiments>3</experiments>
</comment>
<comment type="interaction">
    <interactant intactId="EBI-1797313">
        <id>Q8WVJ9</id>
    </interactant>
    <interactant intactId="EBI-1646991">
        <id>P15036</id>
        <label>ETS2</label>
    </interactant>
    <organismsDiffer>false</organismsDiffer>
    <experiments>2</experiments>
</comment>
<comment type="interaction">
    <interactant intactId="EBI-1797313">
        <id>Q8WVJ9</id>
    </interactant>
    <interactant intactId="EBI-7251368">
        <id>Q9BZE0</id>
        <label>GLIS2</label>
    </interactant>
    <organismsDiffer>false</organismsDiffer>
    <experiments>3</experiments>
</comment>
<comment type="interaction">
    <interactant intactId="EBI-1797313">
        <id>Q8WVJ9</id>
    </interactant>
    <interactant intactId="EBI-466029">
        <id>P42858</id>
        <label>HTT</label>
    </interactant>
    <organismsDiffer>false</organismsDiffer>
    <experiments>15</experiments>
</comment>
<comment type="interaction">
    <interactant intactId="EBI-1797313">
        <id>Q8WVJ9</id>
    </interactant>
    <interactant intactId="EBI-50433196">
        <id>A0A6Q8PF08</id>
        <label>PMP22</label>
    </interactant>
    <organismsDiffer>false</organismsDiffer>
    <experiments>3</experiments>
</comment>
<comment type="interaction">
    <interactant intactId="EBI-1797313">
        <id>Q8WVJ9</id>
    </interactant>
    <interactant intactId="EBI-985879">
        <id>P37840</id>
        <label>SNCA</label>
    </interactant>
    <organismsDiffer>false</organismsDiffer>
    <experiments>3</experiments>
</comment>
<comment type="interaction">
    <interactant intactId="EBI-1797313">
        <id>Q8WVJ9</id>
    </interactant>
    <interactant intactId="EBI-722877">
        <id>Q99081</id>
        <label>TCF12</label>
    </interactant>
    <organismsDiffer>false</organismsDiffer>
    <experiments>5</experiments>
</comment>
<comment type="interaction">
    <interactant intactId="EBI-1797313">
        <id>Q8WVJ9</id>
    </interactant>
    <interactant intactId="EBI-11952764">
        <id>Q99081-3</id>
        <label>TCF12</label>
    </interactant>
    <organismsDiffer>false</organismsDiffer>
    <experiments>3</experiments>
</comment>
<comment type="interaction">
    <interactant intactId="EBI-1797313">
        <id>Q8WVJ9</id>
    </interactant>
    <interactant intactId="EBI-12000326">
        <id>P15923-3</id>
        <label>TCF3</label>
    </interactant>
    <organismsDiffer>false</organismsDiffer>
    <experiments>3</experiments>
</comment>
<comment type="interaction">
    <interactant intactId="EBI-1797313">
        <id>Q8WVJ9</id>
    </interactant>
    <interactant intactId="EBI-533224">
        <id>P15884</id>
        <label>TCF4</label>
    </interactant>
    <organismsDiffer>false</organismsDiffer>
    <experiments>5</experiments>
</comment>
<comment type="subcellular location">
    <subcellularLocation>
        <location evidence="2 4">Nucleus</location>
    </subcellularLocation>
    <subcellularLocation>
        <location evidence="4">Cytoplasm</location>
    </subcellularLocation>
    <text>Mainly nuclear during embryonic development. Cytoplasmic in adult tissues.</text>
</comment>
<comment type="tissue specificity">
    <text evidence="4">In the embryo, highly expressed in chondrogenic cells. In embryonic skin, expressed in the undifferentiated mesenchymal layer beneath the epidermis which later develops into the dermis. Expressed in early myeloid cells but not in lymphoid cells in the liver. Expression also detected in the secretory ependymal epithelium of the choroid plexus primordium. In the adult, expressed in secreting glandular tissues and tubules.</text>
</comment>
<comment type="disease" evidence="5 6">
    <disease id="DI-03079">
        <name>Focal facial dermal dysplasia 3, Setleis type</name>
        <acronym>FFDD3</acronym>
        <description>A form of focal facial dermal dysplasia, a group of developmental defects characterized by bitemporal or preauricular skin lesions resembling aplasia cutis congenita. FFDD3 is characterized by distinctive bitemporal scar-like depressions resembling forceps marks, and additional facial features, including a coarse and leonine appearance, absent eyelashes on both lids or multiple rows on the upper lids, absent Meibomian glands, slanted eyebrows, chin clefting, and hypo- or hyperpigmentation of the skin. Histologically, the bitemporal lesion is an ectodermal dysplasia with near absence of subcutaneous fat, suggesting insufficient migration of neural crest cells into the frontonasal process and the first branchial arch.</description>
        <dbReference type="MIM" id="227260"/>
    </disease>
    <text>The disease is caused by variants affecting the gene represented in this entry.</text>
</comment>
<comment type="disease" evidence="7">
    <disease id="DI-04542">
        <name>Ablepharon-macrostomia syndrome</name>
        <acronym>AMS</acronym>
        <description>A congenital ectodermal dysplasia characterized by absent eyelids, macrostomia, microtia, redundant skin, sparse hair, dysmorphic nose and ears, variable abnormalities of the nipples, genitalia, fingers, and hands, largely normal intellectual and motor development, and poor growth.</description>
        <dbReference type="MIM" id="200110"/>
    </disease>
    <text>The disease is caused by variants affecting the gene represented in this entry.</text>
</comment>
<comment type="disease" evidence="7">
    <disease id="DI-04543">
        <name>Barber-Say syndrome</name>
        <acronym>BBRSAY</acronym>
        <description>A rare ectodermal dysplasia characterized by ectropion, macrostomia, ear abnormalities, broad nasal bridge, bulbous nose, redundant skin, hypertrichosis, dental abnormalities, and variable other features.</description>
        <dbReference type="MIM" id="209885"/>
    </disease>
    <text>The disease is caused by variants affecting the gene represented in this entry.</text>
</comment>